<evidence type="ECO:0000303" key="1">
    <source>
    </source>
</evidence>
<evidence type="ECO:0000305" key="2"/>
<organism>
    <name type="scientific">Arabidopsis thaliana</name>
    <name type="common">Mouse-ear cress</name>
    <dbReference type="NCBI Taxonomy" id="3702"/>
    <lineage>
        <taxon>Eukaryota</taxon>
        <taxon>Viridiplantae</taxon>
        <taxon>Streptophyta</taxon>
        <taxon>Embryophyta</taxon>
        <taxon>Tracheophyta</taxon>
        <taxon>Spermatophyta</taxon>
        <taxon>Magnoliopsida</taxon>
        <taxon>eudicotyledons</taxon>
        <taxon>Gunneridae</taxon>
        <taxon>Pentapetalae</taxon>
        <taxon>rosids</taxon>
        <taxon>malvids</taxon>
        <taxon>Brassicales</taxon>
        <taxon>Brassicaceae</taxon>
        <taxon>Camelineae</taxon>
        <taxon>Arabidopsis</taxon>
    </lineage>
</organism>
<proteinExistence type="evidence at transcript level"/>
<keyword id="KW-1185">Reference proteome</keyword>
<keyword id="KW-0687">Ribonucleoprotein</keyword>
<keyword id="KW-0689">Ribosomal protein</keyword>
<gene>
    <name type="primary">RPL13AD</name>
    <name type="ordered locus">At5g48760</name>
    <name type="ORF">K24G6.9</name>
</gene>
<reference key="1">
    <citation type="journal article" date="1998" name="DNA Res.">
        <title>Structural analysis of Arabidopsis thaliana chromosome 5. VI. Sequence features of the regions of 1,367,185 bp covered by 19 physically assigned P1 and TAC clones.</title>
        <authorList>
            <person name="Kotani H."/>
            <person name="Nakamura Y."/>
            <person name="Sato S."/>
            <person name="Asamizu E."/>
            <person name="Kaneko T."/>
            <person name="Miyajima N."/>
            <person name="Tabata S."/>
        </authorList>
    </citation>
    <scope>NUCLEOTIDE SEQUENCE [LARGE SCALE GENOMIC DNA]</scope>
    <source>
        <strain>cv. Columbia</strain>
    </source>
</reference>
<reference key="2">
    <citation type="journal article" date="2017" name="Plant J.">
        <title>Araport11: a complete reannotation of the Arabidopsis thaliana reference genome.</title>
        <authorList>
            <person name="Cheng C.Y."/>
            <person name="Krishnakumar V."/>
            <person name="Chan A.P."/>
            <person name="Thibaud-Nissen F."/>
            <person name="Schobel S."/>
            <person name="Town C.D."/>
        </authorList>
    </citation>
    <scope>GENOME REANNOTATION</scope>
    <source>
        <strain>cv. Columbia</strain>
    </source>
</reference>
<reference key="3">
    <citation type="journal article" date="2003" name="Science">
        <title>Empirical analysis of transcriptional activity in the Arabidopsis genome.</title>
        <authorList>
            <person name="Yamada K."/>
            <person name="Lim J."/>
            <person name="Dale J.M."/>
            <person name="Chen H."/>
            <person name="Shinn P."/>
            <person name="Palm C.J."/>
            <person name="Southwick A.M."/>
            <person name="Wu H.C."/>
            <person name="Kim C.J."/>
            <person name="Nguyen M."/>
            <person name="Pham P.K."/>
            <person name="Cheuk R.F."/>
            <person name="Karlin-Newmann G."/>
            <person name="Liu S.X."/>
            <person name="Lam B."/>
            <person name="Sakano H."/>
            <person name="Wu T."/>
            <person name="Yu G."/>
            <person name="Miranda M."/>
            <person name="Quach H.L."/>
            <person name="Tripp M."/>
            <person name="Chang C.H."/>
            <person name="Lee J.M."/>
            <person name="Toriumi M.J."/>
            <person name="Chan M.M."/>
            <person name="Tang C.C."/>
            <person name="Onodera C.S."/>
            <person name="Deng J.M."/>
            <person name="Akiyama K."/>
            <person name="Ansari Y."/>
            <person name="Arakawa T."/>
            <person name="Banh J."/>
            <person name="Banno F."/>
            <person name="Bowser L."/>
            <person name="Brooks S.Y."/>
            <person name="Carninci P."/>
            <person name="Chao Q."/>
            <person name="Choy N."/>
            <person name="Enju A."/>
            <person name="Goldsmith A.D."/>
            <person name="Gurjal M."/>
            <person name="Hansen N.F."/>
            <person name="Hayashizaki Y."/>
            <person name="Johnson-Hopson C."/>
            <person name="Hsuan V.W."/>
            <person name="Iida K."/>
            <person name="Karnes M."/>
            <person name="Khan S."/>
            <person name="Koesema E."/>
            <person name="Ishida J."/>
            <person name="Jiang P.X."/>
            <person name="Jones T."/>
            <person name="Kawai J."/>
            <person name="Kamiya A."/>
            <person name="Meyers C."/>
            <person name="Nakajima M."/>
            <person name="Narusaka M."/>
            <person name="Seki M."/>
            <person name="Sakurai T."/>
            <person name="Satou M."/>
            <person name="Tamse R."/>
            <person name="Vaysberg M."/>
            <person name="Wallender E.K."/>
            <person name="Wong C."/>
            <person name="Yamamura Y."/>
            <person name="Yuan S."/>
            <person name="Shinozaki K."/>
            <person name="Davis R.W."/>
            <person name="Theologis A."/>
            <person name="Ecker J.R."/>
        </authorList>
    </citation>
    <scope>NUCLEOTIDE SEQUENCE [LARGE SCALE MRNA]</scope>
    <source>
        <strain>cv. Columbia</strain>
    </source>
</reference>
<reference key="4">
    <citation type="submission" date="2002-03" db="EMBL/GenBank/DDBJ databases">
        <title>Full-length cDNA from Arabidopsis thaliana.</title>
        <authorList>
            <person name="Brover V.V."/>
            <person name="Troukhan M.E."/>
            <person name="Alexandrov N.A."/>
            <person name="Lu Y.-P."/>
            <person name="Flavell R.B."/>
            <person name="Feldmann K.A."/>
        </authorList>
    </citation>
    <scope>NUCLEOTIDE SEQUENCE [LARGE SCALE MRNA]</scope>
</reference>
<reference key="5">
    <citation type="journal article" date="1996" name="Plant J.">
        <title>Further progress towards a catalogue of all Arabidopsis genes: analysis of a set of 5000 non-redundant ESTs.</title>
        <authorList>
            <person name="Cooke R."/>
            <person name="Raynal M."/>
            <person name="Laudie M."/>
            <person name="Grellet F."/>
            <person name="Delseny M."/>
            <person name="Morris P.-C."/>
            <person name="Guerrier D."/>
            <person name="Giraudat J."/>
            <person name="Quigley F."/>
            <person name="Clabault G."/>
            <person name="Li Y.-F."/>
            <person name="Mache R."/>
            <person name="Krivitzky M."/>
            <person name="Gy I.J.-J."/>
            <person name="Kreis M."/>
            <person name="Lecharny A."/>
            <person name="Parmentier Y."/>
            <person name="Marbach J."/>
            <person name="Fleck J."/>
            <person name="Clement B."/>
            <person name="Philipps G."/>
            <person name="Herve C."/>
            <person name="Bardet C."/>
            <person name="Tremousaygue D."/>
            <person name="Lescure B."/>
            <person name="Lacomme C."/>
            <person name="Roby D."/>
            <person name="Jourjon M.-F."/>
            <person name="Chabrier P."/>
            <person name="Charpenteau J.-L."/>
            <person name="Desprez T."/>
            <person name="Amselem J."/>
            <person name="Chiapello H."/>
            <person name="Hoefte H."/>
        </authorList>
    </citation>
    <scope>NUCLEOTIDE SEQUENCE [LARGE SCALE MRNA] OF 1-104</scope>
    <source>
        <strain>cv. Columbia</strain>
    </source>
</reference>
<reference key="6">
    <citation type="journal article" date="2001" name="Plant Physiol.">
        <title>The organization of cytoplasmic ribosomal protein genes in the Arabidopsis genome.</title>
        <authorList>
            <person name="Barakat A."/>
            <person name="Szick-Miranda K."/>
            <person name="Chang I.-F."/>
            <person name="Guyot R."/>
            <person name="Blanc G."/>
            <person name="Cooke R."/>
            <person name="Delseny M."/>
            <person name="Bailey-Serres J."/>
        </authorList>
    </citation>
    <scope>GENE FAMILY ORGANIZATION</scope>
    <scope>NOMENCLATURE</scope>
</reference>
<reference key="7">
    <citation type="journal article" date="2023" name="Plant Cell">
        <title>An updated nomenclature for plant ribosomal protein genes.</title>
        <authorList>
            <person name="Scarpin M.R."/>
            <person name="Busche M."/>
            <person name="Martinez R.E."/>
            <person name="Harper L.C."/>
            <person name="Reiser L."/>
            <person name="Szakonyi D."/>
            <person name="Merchante C."/>
            <person name="Lan T."/>
            <person name="Xiong W."/>
            <person name="Mo B."/>
            <person name="Tang G."/>
            <person name="Chen X."/>
            <person name="Bailey-Serres J."/>
            <person name="Browning K.S."/>
            <person name="Brunkard J.O."/>
        </authorList>
    </citation>
    <scope>NOMENCLATURE</scope>
</reference>
<dbReference type="EMBL" id="AB012242">
    <property type="protein sequence ID" value="BAB09429.1"/>
    <property type="molecule type" value="Genomic_DNA"/>
</dbReference>
<dbReference type="EMBL" id="CP002688">
    <property type="protein sequence ID" value="AED95720.1"/>
    <property type="molecule type" value="Genomic_DNA"/>
</dbReference>
<dbReference type="EMBL" id="CP002688">
    <property type="protein sequence ID" value="AED95721.1"/>
    <property type="molecule type" value="Genomic_DNA"/>
</dbReference>
<dbReference type="EMBL" id="AY090359">
    <property type="protein sequence ID" value="AAL91263.1"/>
    <property type="molecule type" value="mRNA"/>
</dbReference>
<dbReference type="EMBL" id="AY122902">
    <property type="protein sequence ID" value="AAM67435.1"/>
    <property type="molecule type" value="mRNA"/>
</dbReference>
<dbReference type="EMBL" id="AY088191">
    <property type="protein sequence ID" value="AAM65734.1"/>
    <property type="molecule type" value="mRNA"/>
</dbReference>
<dbReference type="EMBL" id="Z26407">
    <property type="protein sequence ID" value="CAA81241.1"/>
    <property type="molecule type" value="mRNA"/>
</dbReference>
<dbReference type="RefSeq" id="NP_001078737.1">
    <property type="nucleotide sequence ID" value="NM_001085268.2"/>
</dbReference>
<dbReference type="RefSeq" id="NP_199687.1">
    <property type="nucleotide sequence ID" value="NM_124253.3"/>
</dbReference>
<dbReference type="SMR" id="Q9FKC0"/>
<dbReference type="BioGRID" id="20180">
    <property type="interactions" value="42"/>
</dbReference>
<dbReference type="FunCoup" id="Q9FKC0">
    <property type="interactions" value="3332"/>
</dbReference>
<dbReference type="STRING" id="3702.Q9FKC0"/>
<dbReference type="iPTMnet" id="Q9FKC0"/>
<dbReference type="PaxDb" id="3702-AT5G48760.2"/>
<dbReference type="ProteomicsDB" id="225918"/>
<dbReference type="EnsemblPlants" id="AT5G48760.1">
    <property type="protein sequence ID" value="AT5G48760.1"/>
    <property type="gene ID" value="AT5G48760"/>
</dbReference>
<dbReference type="EnsemblPlants" id="AT5G48760.2">
    <property type="protein sequence ID" value="AT5G48760.2"/>
    <property type="gene ID" value="AT5G48760"/>
</dbReference>
<dbReference type="GeneID" id="834934"/>
<dbReference type="Gramene" id="AT5G48760.1">
    <property type="protein sequence ID" value="AT5G48760.1"/>
    <property type="gene ID" value="AT5G48760"/>
</dbReference>
<dbReference type="Gramene" id="AT5G48760.2">
    <property type="protein sequence ID" value="AT5G48760.2"/>
    <property type="gene ID" value="AT5G48760"/>
</dbReference>
<dbReference type="KEGG" id="ath:AT5G48760"/>
<dbReference type="Araport" id="AT5G48760"/>
<dbReference type="TAIR" id="AT5G48760"/>
<dbReference type="eggNOG" id="KOG3204">
    <property type="taxonomic scope" value="Eukaryota"/>
</dbReference>
<dbReference type="HOGENOM" id="CLU_076922_0_0_1"/>
<dbReference type="InParanoid" id="Q9FKC0"/>
<dbReference type="OMA" id="HMMGRLA"/>
<dbReference type="OrthoDB" id="1882297at2759"/>
<dbReference type="PhylomeDB" id="Q9FKC0"/>
<dbReference type="CD-CODE" id="4299E36E">
    <property type="entry name" value="Nucleolus"/>
</dbReference>
<dbReference type="PRO" id="PR:Q9FKC0"/>
<dbReference type="Proteomes" id="UP000006548">
    <property type="component" value="Chromosome 5"/>
</dbReference>
<dbReference type="ExpressionAtlas" id="Q9FKC0">
    <property type="expression patterns" value="baseline and differential"/>
</dbReference>
<dbReference type="GO" id="GO:0022625">
    <property type="term" value="C:cytosolic large ribosomal subunit"/>
    <property type="evidence" value="ECO:0007005"/>
    <property type="project" value="TAIR"/>
</dbReference>
<dbReference type="GO" id="GO:0022626">
    <property type="term" value="C:cytosolic ribosome"/>
    <property type="evidence" value="ECO:0007005"/>
    <property type="project" value="TAIR"/>
</dbReference>
<dbReference type="GO" id="GO:0009536">
    <property type="term" value="C:plastid"/>
    <property type="evidence" value="ECO:0007005"/>
    <property type="project" value="TAIR"/>
</dbReference>
<dbReference type="GO" id="GO:0003729">
    <property type="term" value="F:mRNA binding"/>
    <property type="evidence" value="ECO:0000314"/>
    <property type="project" value="TAIR"/>
</dbReference>
<dbReference type="GO" id="GO:0003735">
    <property type="term" value="F:structural constituent of ribosome"/>
    <property type="evidence" value="ECO:0000314"/>
    <property type="project" value="CAFA"/>
</dbReference>
<dbReference type="GO" id="GO:0006412">
    <property type="term" value="P:translation"/>
    <property type="evidence" value="ECO:0007669"/>
    <property type="project" value="InterPro"/>
</dbReference>
<dbReference type="CDD" id="cd00392">
    <property type="entry name" value="Ribosomal_L13"/>
    <property type="match status" value="1"/>
</dbReference>
<dbReference type="FunFam" id="6.10.250.3250:FF:000001">
    <property type="entry name" value="60S ribosomal protein L13a"/>
    <property type="match status" value="1"/>
</dbReference>
<dbReference type="FunFam" id="3.90.1180.10:FF:000003">
    <property type="entry name" value="60S ribosomal protein L13a-4"/>
    <property type="match status" value="1"/>
</dbReference>
<dbReference type="Gene3D" id="6.10.250.3250">
    <property type="match status" value="1"/>
</dbReference>
<dbReference type="Gene3D" id="3.90.1180.10">
    <property type="entry name" value="Ribosomal protein L13"/>
    <property type="match status" value="1"/>
</dbReference>
<dbReference type="HAMAP" id="MF_01366">
    <property type="entry name" value="Ribosomal_uL13"/>
    <property type="match status" value="1"/>
</dbReference>
<dbReference type="InterPro" id="IPR005822">
    <property type="entry name" value="Ribosomal_uL13"/>
</dbReference>
<dbReference type="InterPro" id="IPR023563">
    <property type="entry name" value="Ribosomal_uL13_CS"/>
</dbReference>
<dbReference type="InterPro" id="IPR005755">
    <property type="entry name" value="Ribosomal_uL13_euk/arc"/>
</dbReference>
<dbReference type="InterPro" id="IPR036899">
    <property type="entry name" value="Ribosomal_uL13_sf"/>
</dbReference>
<dbReference type="NCBIfam" id="TIGR01077">
    <property type="entry name" value="L13_A_E"/>
    <property type="match status" value="1"/>
</dbReference>
<dbReference type="PANTHER" id="PTHR11545:SF37">
    <property type="entry name" value="LARGE RIBOSOMAL SUBUNIT PROTEIN UL13W"/>
    <property type="match status" value="1"/>
</dbReference>
<dbReference type="PANTHER" id="PTHR11545">
    <property type="entry name" value="RIBOSOMAL PROTEIN L13"/>
    <property type="match status" value="1"/>
</dbReference>
<dbReference type="Pfam" id="PF00572">
    <property type="entry name" value="Ribosomal_L13"/>
    <property type="match status" value="1"/>
</dbReference>
<dbReference type="SUPFAM" id="SSF52161">
    <property type="entry name" value="Ribosomal protein L13"/>
    <property type="match status" value="1"/>
</dbReference>
<dbReference type="PROSITE" id="PS00783">
    <property type="entry name" value="RIBOSOMAL_L13"/>
    <property type="match status" value="1"/>
</dbReference>
<sequence>MVSGSGICSKRVVVDARHHMLGRLASITAKELLNGQKVVIVRCEEICLSGGLVRQKMKYMRFLRKRMNTKPSHGPIHFRAPSKIFWRTVRGMIPHKTKRGAAALARLKVYEGVPTPYDKIKRMVIPDALKVLRLQAGHKYCLLGRLSSEVGWNHYDTIKELETKRKERAHVVYERKKQLNKLRVKAEKVAEEKLGAQLDILAPVKY</sequence>
<feature type="chain" id="PRO_0000133783" description="Large ribosomal subunit protein uL13w">
    <location>
        <begin position="1"/>
        <end position="206"/>
    </location>
</feature>
<feature type="sequence conflict" description="In Ref. 5; CAA81241." evidence="2" ref="5">
    <original>R</original>
    <variation>A</variation>
    <location>
        <position position="17"/>
    </location>
</feature>
<comment type="similarity">
    <text evidence="2">Belongs to the universal ribosomal protein uL13 family.</text>
</comment>
<name>R13A4_ARATH</name>
<protein>
    <recommendedName>
        <fullName evidence="1">Large ribosomal subunit protein uL13w</fullName>
    </recommendedName>
    <alternativeName>
        <fullName>60S ribosomal protein L13a-4</fullName>
    </alternativeName>
</protein>
<accession>Q9FKC0</accession>
<accession>Q42084</accession>